<name>COBS_PSEFS</name>
<comment type="function">
    <text evidence="1">Joins adenosylcobinamide-GDP and alpha-ribazole to generate adenosylcobalamin (Ado-cobalamin). Also synthesizes adenosylcobalamin 5'-phosphate from adenosylcobinamide-GDP and alpha-ribazole 5'-phosphate.</text>
</comment>
<comment type="catalytic activity">
    <reaction evidence="1">
        <text>alpha-ribazole + adenosylcob(III)inamide-GDP = adenosylcob(III)alamin + GMP + H(+)</text>
        <dbReference type="Rhea" id="RHEA:16049"/>
        <dbReference type="ChEBI" id="CHEBI:10329"/>
        <dbReference type="ChEBI" id="CHEBI:15378"/>
        <dbReference type="ChEBI" id="CHEBI:18408"/>
        <dbReference type="ChEBI" id="CHEBI:58115"/>
        <dbReference type="ChEBI" id="CHEBI:60487"/>
        <dbReference type="EC" id="2.7.8.26"/>
    </reaction>
</comment>
<comment type="catalytic activity">
    <reaction evidence="1">
        <text>alpha-ribazole 5'-phosphate + adenosylcob(III)inamide-GDP = adenosylcob(III)alamin 5'-phosphate + GMP + H(+)</text>
        <dbReference type="Rhea" id="RHEA:23560"/>
        <dbReference type="ChEBI" id="CHEBI:15378"/>
        <dbReference type="ChEBI" id="CHEBI:57918"/>
        <dbReference type="ChEBI" id="CHEBI:58115"/>
        <dbReference type="ChEBI" id="CHEBI:60487"/>
        <dbReference type="ChEBI" id="CHEBI:60493"/>
        <dbReference type="EC" id="2.7.8.26"/>
    </reaction>
</comment>
<comment type="cofactor">
    <cofactor evidence="1">
        <name>Mg(2+)</name>
        <dbReference type="ChEBI" id="CHEBI:18420"/>
    </cofactor>
</comment>
<comment type="pathway">
    <text evidence="1">Cofactor biosynthesis; adenosylcobalamin biosynthesis; adenosylcobalamin from cob(II)yrinate a,c-diamide: step 7/7.</text>
</comment>
<comment type="subcellular location">
    <subcellularLocation>
        <location evidence="1">Cell inner membrane</location>
        <topology evidence="1">Multi-pass membrane protein</topology>
    </subcellularLocation>
</comment>
<comment type="similarity">
    <text evidence="1">Belongs to the CobS family.</text>
</comment>
<sequence length="242" mass="25254">MLPFWIALQFLSSLPIRLPGMPQPQELGRSLLFYPVVGVLFGVLLWALSTALMGAPLLLHAALLLTAWVLLSGGLHLDGLADSADAWLGGFGDRERTLAIMKDPRSGPIAVVTLGLVLLLKFTALVALIEQQNGAALILAPLIGRASMLALFLTTRYVRAGGLGQALSDHLPRIVGQQVLILSGLACILIGGFSGGVAVLLAAICFIGLRQLMVNRLGGTTGDTAGALLELLEVAVLVGLAL</sequence>
<keyword id="KW-0997">Cell inner membrane</keyword>
<keyword id="KW-1003">Cell membrane</keyword>
<keyword id="KW-0169">Cobalamin biosynthesis</keyword>
<keyword id="KW-0460">Magnesium</keyword>
<keyword id="KW-0472">Membrane</keyword>
<keyword id="KW-0808">Transferase</keyword>
<keyword id="KW-0812">Transmembrane</keyword>
<keyword id="KW-1133">Transmembrane helix</keyword>
<feature type="chain" id="PRO_1000212695" description="Adenosylcobinamide-GDP ribazoletransferase">
    <location>
        <begin position="1"/>
        <end position="242"/>
    </location>
</feature>
<feature type="transmembrane region" description="Helical" evidence="1">
    <location>
        <begin position="31"/>
        <end position="51"/>
    </location>
</feature>
<feature type="transmembrane region" description="Helical" evidence="1">
    <location>
        <begin position="52"/>
        <end position="72"/>
    </location>
</feature>
<feature type="transmembrane region" description="Helical" evidence="1">
    <location>
        <begin position="109"/>
        <end position="129"/>
    </location>
</feature>
<feature type="transmembrane region" description="Helical" evidence="1">
    <location>
        <begin position="134"/>
        <end position="154"/>
    </location>
</feature>
<feature type="transmembrane region" description="Helical" evidence="1">
    <location>
        <begin position="188"/>
        <end position="208"/>
    </location>
</feature>
<accession>C3K0Y6</accession>
<dbReference type="EC" id="2.7.8.26" evidence="1"/>
<dbReference type="EMBL" id="AM181176">
    <property type="protein sequence ID" value="CAY51177.1"/>
    <property type="molecule type" value="Genomic_DNA"/>
</dbReference>
<dbReference type="RefSeq" id="WP_015885232.1">
    <property type="nucleotide sequence ID" value="NC_012660.1"/>
</dbReference>
<dbReference type="STRING" id="294.SRM1_01647"/>
<dbReference type="PATRIC" id="fig|216595.4.peg.4625"/>
<dbReference type="eggNOG" id="COG0368">
    <property type="taxonomic scope" value="Bacteria"/>
</dbReference>
<dbReference type="HOGENOM" id="CLU_057426_3_1_6"/>
<dbReference type="OrthoDB" id="9794626at2"/>
<dbReference type="UniPathway" id="UPA00148">
    <property type="reaction ID" value="UER00238"/>
</dbReference>
<dbReference type="GO" id="GO:0005886">
    <property type="term" value="C:plasma membrane"/>
    <property type="evidence" value="ECO:0007669"/>
    <property type="project" value="UniProtKB-SubCell"/>
</dbReference>
<dbReference type="GO" id="GO:0051073">
    <property type="term" value="F:adenosylcobinamide-GDP ribazoletransferase activity"/>
    <property type="evidence" value="ECO:0007669"/>
    <property type="project" value="UniProtKB-UniRule"/>
</dbReference>
<dbReference type="GO" id="GO:0008818">
    <property type="term" value="F:cobalamin 5'-phosphate synthase activity"/>
    <property type="evidence" value="ECO:0007669"/>
    <property type="project" value="UniProtKB-UniRule"/>
</dbReference>
<dbReference type="GO" id="GO:0009236">
    <property type="term" value="P:cobalamin biosynthetic process"/>
    <property type="evidence" value="ECO:0007669"/>
    <property type="project" value="UniProtKB-UniRule"/>
</dbReference>
<dbReference type="HAMAP" id="MF_00719">
    <property type="entry name" value="CobS"/>
    <property type="match status" value="1"/>
</dbReference>
<dbReference type="InterPro" id="IPR003805">
    <property type="entry name" value="CobS"/>
</dbReference>
<dbReference type="NCBIfam" id="TIGR00317">
    <property type="entry name" value="cobS"/>
    <property type="match status" value="1"/>
</dbReference>
<dbReference type="NCBIfam" id="NF001278">
    <property type="entry name" value="PRK00235.1-5"/>
    <property type="match status" value="1"/>
</dbReference>
<dbReference type="PANTHER" id="PTHR34148">
    <property type="entry name" value="ADENOSYLCOBINAMIDE-GDP RIBAZOLETRANSFERASE"/>
    <property type="match status" value="1"/>
</dbReference>
<dbReference type="PANTHER" id="PTHR34148:SF1">
    <property type="entry name" value="ADENOSYLCOBINAMIDE-GDP RIBAZOLETRANSFERASE"/>
    <property type="match status" value="1"/>
</dbReference>
<dbReference type="Pfam" id="PF02654">
    <property type="entry name" value="CobS"/>
    <property type="match status" value="1"/>
</dbReference>
<organism>
    <name type="scientific">Pseudomonas fluorescens (strain SBW25)</name>
    <dbReference type="NCBI Taxonomy" id="216595"/>
    <lineage>
        <taxon>Bacteria</taxon>
        <taxon>Pseudomonadati</taxon>
        <taxon>Pseudomonadota</taxon>
        <taxon>Gammaproteobacteria</taxon>
        <taxon>Pseudomonadales</taxon>
        <taxon>Pseudomonadaceae</taxon>
        <taxon>Pseudomonas</taxon>
    </lineage>
</organism>
<evidence type="ECO:0000255" key="1">
    <source>
        <dbReference type="HAMAP-Rule" id="MF_00719"/>
    </source>
</evidence>
<proteinExistence type="inferred from homology"/>
<gene>
    <name evidence="1" type="primary">cobS</name>
    <name type="ordered locus">PFLU_4481</name>
</gene>
<reference key="1">
    <citation type="journal article" date="2009" name="Genome Biol.">
        <title>Genomic and genetic analyses of diversity and plant interactions of Pseudomonas fluorescens.</title>
        <authorList>
            <person name="Silby M.W."/>
            <person name="Cerdeno-Tarraga A.M."/>
            <person name="Vernikos G.S."/>
            <person name="Giddens S.R."/>
            <person name="Jackson R.W."/>
            <person name="Preston G.M."/>
            <person name="Zhang X.-X."/>
            <person name="Moon C.D."/>
            <person name="Gehrig S.M."/>
            <person name="Godfrey S.A.C."/>
            <person name="Knight C.G."/>
            <person name="Malone J.G."/>
            <person name="Robinson Z."/>
            <person name="Spiers A.J."/>
            <person name="Harris S."/>
            <person name="Challis G.L."/>
            <person name="Yaxley A.M."/>
            <person name="Harris D."/>
            <person name="Seeger K."/>
            <person name="Murphy L."/>
            <person name="Rutter S."/>
            <person name="Squares R."/>
            <person name="Quail M.A."/>
            <person name="Saunders E."/>
            <person name="Mavromatis K."/>
            <person name="Brettin T.S."/>
            <person name="Bentley S.D."/>
            <person name="Hothersall J."/>
            <person name="Stephens E."/>
            <person name="Thomas C.M."/>
            <person name="Parkhill J."/>
            <person name="Levy S.B."/>
            <person name="Rainey P.B."/>
            <person name="Thomson N.R."/>
        </authorList>
    </citation>
    <scope>NUCLEOTIDE SEQUENCE [LARGE SCALE GENOMIC DNA]</scope>
    <source>
        <strain>SBW25</strain>
    </source>
</reference>
<protein>
    <recommendedName>
        <fullName evidence="1">Adenosylcobinamide-GDP ribazoletransferase</fullName>
        <ecNumber evidence="1">2.7.8.26</ecNumber>
    </recommendedName>
    <alternativeName>
        <fullName evidence="1">Cobalamin synthase</fullName>
    </alternativeName>
    <alternativeName>
        <fullName evidence="1">Cobalamin-5'-phosphate synthase</fullName>
    </alternativeName>
</protein>